<accession>Q31UU4</accession>
<dbReference type="EMBL" id="CP000036">
    <property type="protein sequence ID" value="ABB68164.1"/>
    <property type="status" value="ALT_INIT"/>
    <property type="molecule type" value="Genomic_DNA"/>
</dbReference>
<dbReference type="RefSeq" id="WP_001279754.1">
    <property type="nucleotide sequence ID" value="NC_007613.1"/>
</dbReference>
<dbReference type="SMR" id="Q31UU4"/>
<dbReference type="KEGG" id="sbo:SBO_3686"/>
<dbReference type="HOGENOM" id="CLU_035023_3_1_6"/>
<dbReference type="Proteomes" id="UP000007067">
    <property type="component" value="Chromosome"/>
</dbReference>
<dbReference type="GO" id="GO:0005886">
    <property type="term" value="C:plasma membrane"/>
    <property type="evidence" value="ECO:0007669"/>
    <property type="project" value="UniProtKB-SubCell"/>
</dbReference>
<dbReference type="GO" id="GO:0008324">
    <property type="term" value="F:monoatomic cation transmembrane transporter activity"/>
    <property type="evidence" value="ECO:0007669"/>
    <property type="project" value="InterPro"/>
</dbReference>
<dbReference type="GO" id="GO:0006813">
    <property type="term" value="P:potassium ion transport"/>
    <property type="evidence" value="ECO:0007669"/>
    <property type="project" value="InterPro"/>
</dbReference>
<dbReference type="FunFam" id="3.30.70.1450:FF:000004">
    <property type="entry name" value="Putative transport protein YidE"/>
    <property type="match status" value="1"/>
</dbReference>
<dbReference type="Gene3D" id="3.30.70.1450">
    <property type="entry name" value="Regulator of K+ conductance, C-terminal domain"/>
    <property type="match status" value="2"/>
</dbReference>
<dbReference type="HAMAP" id="MF_01016">
    <property type="entry name" value="YidE"/>
    <property type="match status" value="1"/>
</dbReference>
<dbReference type="InterPro" id="IPR050144">
    <property type="entry name" value="AAE_transporter"/>
</dbReference>
<dbReference type="InterPro" id="IPR006037">
    <property type="entry name" value="RCK_C"/>
</dbReference>
<dbReference type="InterPro" id="IPR036721">
    <property type="entry name" value="RCK_C_sf"/>
</dbReference>
<dbReference type="InterPro" id="IPR023018">
    <property type="entry name" value="Transpt_YidE_put"/>
</dbReference>
<dbReference type="InterPro" id="IPR006512">
    <property type="entry name" value="YidE_YbjL"/>
</dbReference>
<dbReference type="NCBIfam" id="NF003007">
    <property type="entry name" value="PRK03818.1"/>
    <property type="match status" value="1"/>
</dbReference>
<dbReference type="NCBIfam" id="TIGR01625">
    <property type="entry name" value="YidE_YbjL_dupl"/>
    <property type="match status" value="2"/>
</dbReference>
<dbReference type="PANTHER" id="PTHR30445">
    <property type="entry name" value="K(+)_H(+) ANTIPORTER SUBUNIT KHTT"/>
    <property type="match status" value="1"/>
</dbReference>
<dbReference type="PANTHER" id="PTHR30445:SF3">
    <property type="entry name" value="TRANSPORT PROTEIN YIDE-RELATED"/>
    <property type="match status" value="1"/>
</dbReference>
<dbReference type="Pfam" id="PF06826">
    <property type="entry name" value="Asp-Al_Ex"/>
    <property type="match status" value="2"/>
</dbReference>
<dbReference type="Pfam" id="PF02080">
    <property type="entry name" value="TrkA_C"/>
    <property type="match status" value="2"/>
</dbReference>
<dbReference type="SUPFAM" id="SSF116726">
    <property type="entry name" value="TrkA C-terminal domain-like"/>
    <property type="match status" value="2"/>
</dbReference>
<dbReference type="PROSITE" id="PS51202">
    <property type="entry name" value="RCK_C"/>
    <property type="match status" value="2"/>
</dbReference>
<feature type="chain" id="PRO_0000226893" description="Putative transport protein YidE">
    <location>
        <begin position="1"/>
        <end position="553"/>
    </location>
</feature>
<feature type="transmembrane region" description="Helical" evidence="1">
    <location>
        <begin position="4"/>
        <end position="24"/>
    </location>
</feature>
<feature type="transmembrane region" description="Helical" evidence="1">
    <location>
        <begin position="28"/>
        <end position="48"/>
    </location>
</feature>
<feature type="transmembrane region" description="Helical" evidence="1">
    <location>
        <begin position="65"/>
        <end position="85"/>
    </location>
</feature>
<feature type="transmembrane region" description="Helical" evidence="1">
    <location>
        <begin position="95"/>
        <end position="115"/>
    </location>
</feature>
<feature type="transmembrane region" description="Helical" evidence="1">
    <location>
        <begin position="158"/>
        <end position="178"/>
    </location>
</feature>
<feature type="transmembrane region" description="Helical" evidence="1">
    <location>
        <begin position="371"/>
        <end position="391"/>
    </location>
</feature>
<feature type="transmembrane region" description="Helical" evidence="1">
    <location>
        <begin position="393"/>
        <end position="413"/>
    </location>
</feature>
<feature type="transmembrane region" description="Helical" evidence="1">
    <location>
        <begin position="439"/>
        <end position="459"/>
    </location>
</feature>
<feature type="transmembrane region" description="Helical" evidence="1">
    <location>
        <begin position="464"/>
        <end position="484"/>
    </location>
</feature>
<feature type="transmembrane region" description="Helical" evidence="1">
    <location>
        <begin position="493"/>
        <end position="513"/>
    </location>
</feature>
<feature type="transmembrane region" description="Helical" evidence="1">
    <location>
        <begin position="533"/>
        <end position="553"/>
    </location>
</feature>
<feature type="domain" description="RCK C-terminal 1" evidence="1">
    <location>
        <begin position="191"/>
        <end position="276"/>
    </location>
</feature>
<feature type="domain" description="RCK C-terminal 2" evidence="1">
    <location>
        <begin position="279"/>
        <end position="361"/>
    </location>
</feature>
<evidence type="ECO:0000255" key="1">
    <source>
        <dbReference type="HAMAP-Rule" id="MF_01016"/>
    </source>
</evidence>
<evidence type="ECO:0000305" key="2"/>
<proteinExistence type="inferred from homology"/>
<gene>
    <name evidence="1" type="primary">yidE</name>
    <name type="ordered locus">SBO_3686</name>
</gene>
<sequence length="553" mass="58965">MSDIALTVSILALVAVVGLFIGNVKFRGIGLGIGGVLFGGIIVGHFVSQAGMTLSSDMLHVIQEFGLILFVYTIGIQVGPGFFASLRVSGLRLNLFAVLIVIIGGLVTAILHKLFDIPLPVVLGIFSGAVTNTPALGAGQQILRDLGTPMEMVDQMGMSYAMAYPFGICGILFTMWMLRVIFRVNVETEAQQHESSRTNGGALIKTINIRVENPNLHDLAIKDVPILNGDKIICSRLKREETLKVPSPDTIIQLGDLLHLVGQPADLHNAQLVIGQEVDTSLSTKGTDLRVERVVVTNENVLGKRIRDLHFKERYDVVISRLNRAGVELVASGDISLQFGDILNLVGRPSAIDAVANVLGNAQQKLQQVQMLPVFIGIGLGVLLGSIPVFVPGFPAALKLGLAGGPLIMALILGRIGSIGKLYWFMPPSANLALRELGIVLFLSVVGLKSGGDFVNTLVNGEGLSWIGYGALITAVPLITVGILARMLAKMNYLTMCGMLAGSMTDPPALAFANNLHPTSGAPALSYATVYPLVMFLRIITPQLLAVLFWSIG</sequence>
<name>YIDE_SHIBS</name>
<organism>
    <name type="scientific">Shigella boydii serotype 4 (strain Sb227)</name>
    <dbReference type="NCBI Taxonomy" id="300268"/>
    <lineage>
        <taxon>Bacteria</taxon>
        <taxon>Pseudomonadati</taxon>
        <taxon>Pseudomonadota</taxon>
        <taxon>Gammaproteobacteria</taxon>
        <taxon>Enterobacterales</taxon>
        <taxon>Enterobacteriaceae</taxon>
        <taxon>Shigella</taxon>
    </lineage>
</organism>
<keyword id="KW-1003">Cell membrane</keyword>
<keyword id="KW-0472">Membrane</keyword>
<keyword id="KW-0677">Repeat</keyword>
<keyword id="KW-0812">Transmembrane</keyword>
<keyword id="KW-1133">Transmembrane helix</keyword>
<keyword id="KW-0813">Transport</keyword>
<protein>
    <recommendedName>
        <fullName evidence="1">Putative transport protein YidE</fullName>
    </recommendedName>
</protein>
<comment type="subcellular location">
    <subcellularLocation>
        <location evidence="1">Cell membrane</location>
        <topology evidence="1">Multi-pass membrane protein</topology>
    </subcellularLocation>
</comment>
<comment type="similarity">
    <text evidence="1">Belongs to the AAE transporter (TC 2.A.81) family. YidE subfamily.</text>
</comment>
<comment type="sequence caution" evidence="2">
    <conflict type="erroneous initiation">
        <sequence resource="EMBL-CDS" id="ABB68164"/>
    </conflict>
</comment>
<reference key="1">
    <citation type="journal article" date="2005" name="Nucleic Acids Res.">
        <title>Genome dynamics and diversity of Shigella species, the etiologic agents of bacillary dysentery.</title>
        <authorList>
            <person name="Yang F."/>
            <person name="Yang J."/>
            <person name="Zhang X."/>
            <person name="Chen L."/>
            <person name="Jiang Y."/>
            <person name="Yan Y."/>
            <person name="Tang X."/>
            <person name="Wang J."/>
            <person name="Xiong Z."/>
            <person name="Dong J."/>
            <person name="Xue Y."/>
            <person name="Zhu Y."/>
            <person name="Xu X."/>
            <person name="Sun L."/>
            <person name="Chen S."/>
            <person name="Nie H."/>
            <person name="Peng J."/>
            <person name="Xu J."/>
            <person name="Wang Y."/>
            <person name="Yuan Z."/>
            <person name="Wen Y."/>
            <person name="Yao Z."/>
            <person name="Shen Y."/>
            <person name="Qiang B."/>
            <person name="Hou Y."/>
            <person name="Yu J."/>
            <person name="Jin Q."/>
        </authorList>
    </citation>
    <scope>NUCLEOTIDE SEQUENCE [LARGE SCALE GENOMIC DNA]</scope>
    <source>
        <strain>Sb227</strain>
    </source>
</reference>